<comment type="subcellular location">
    <subcellularLocation>
        <location evidence="2">Virion tegument</location>
    </subcellularLocation>
    <subcellularLocation>
        <location evidence="1">Host nucleus matrix</location>
    </subcellularLocation>
</comment>
<comment type="similarity">
    <text evidence="3">Belongs to the alphaherpesvirinae HHV-1 UL55 family.</text>
</comment>
<accession>P10239</accession>
<accession>B9VQI4</accession>
<protein>
    <recommendedName>
        <fullName>Tegument protein UL55</fullName>
    </recommendedName>
</protein>
<organismHost>
    <name type="scientific">Homo sapiens</name>
    <name type="common">Human</name>
    <dbReference type="NCBI Taxonomy" id="9606"/>
</organismHost>
<name>TEG6_HHV11</name>
<feature type="chain" id="PRO_0000116117" description="Tegument protein UL55">
    <location>
        <begin position="1"/>
        <end position="186"/>
    </location>
</feature>
<feature type="sequence variant" description="In strain: 17 syn+.">
    <original>H</original>
    <variation>Q</variation>
    <location>
        <position position="142"/>
    </location>
</feature>
<organism>
    <name type="scientific">Human herpesvirus 1 (strain 17)</name>
    <name type="common">HHV-1</name>
    <name type="synonym">Human herpes simplex virus 1</name>
    <dbReference type="NCBI Taxonomy" id="10299"/>
    <lineage>
        <taxon>Viruses</taxon>
        <taxon>Duplodnaviria</taxon>
        <taxon>Heunggongvirae</taxon>
        <taxon>Peploviricota</taxon>
        <taxon>Herviviricetes</taxon>
        <taxon>Herpesvirales</taxon>
        <taxon>Orthoherpesviridae</taxon>
        <taxon>Alphaherpesvirinae</taxon>
        <taxon>Simplexvirus</taxon>
        <taxon>Simplexvirus humanalpha1</taxon>
        <taxon>Human herpesvirus 1</taxon>
    </lineage>
</organism>
<keyword id="KW-1048">Host nucleus</keyword>
<keyword id="KW-1185">Reference proteome</keyword>
<keyword id="KW-0946">Virion</keyword>
<keyword id="KW-0920">Virion tegument</keyword>
<gene>
    <name type="ORF">UL55</name>
</gene>
<dbReference type="EMBL" id="X14112">
    <property type="protein sequence ID" value="CAA32291.1"/>
    <property type="molecule type" value="Genomic_DNA"/>
</dbReference>
<dbReference type="EMBL" id="FJ593289">
    <property type="protein sequence ID" value="ACM62279.1"/>
    <property type="molecule type" value="Genomic_DNA"/>
</dbReference>
<dbReference type="PIR" id="A30090">
    <property type="entry name" value="WMBEY5"/>
</dbReference>
<dbReference type="RefSeq" id="YP_009137131.1">
    <property type="nucleotide sequence ID" value="NC_001806.2"/>
</dbReference>
<dbReference type="DNASU" id="2703427"/>
<dbReference type="GeneID" id="2703427"/>
<dbReference type="KEGG" id="vg:2703427"/>
<dbReference type="Proteomes" id="UP000009294">
    <property type="component" value="Segment"/>
</dbReference>
<dbReference type="Proteomes" id="UP000180652">
    <property type="component" value="Segment"/>
</dbReference>
<dbReference type="GO" id="GO:0044204">
    <property type="term" value="C:host cell nuclear matrix"/>
    <property type="evidence" value="ECO:0007669"/>
    <property type="project" value="UniProtKB-SubCell"/>
</dbReference>
<dbReference type="GO" id="GO:0019033">
    <property type="term" value="C:viral tegument"/>
    <property type="evidence" value="ECO:0007669"/>
    <property type="project" value="UniProtKB-SubCell"/>
</dbReference>
<dbReference type="GO" id="GO:0019058">
    <property type="term" value="P:viral life cycle"/>
    <property type="evidence" value="ECO:0007669"/>
    <property type="project" value="InterPro"/>
</dbReference>
<dbReference type="InterPro" id="IPR007622">
    <property type="entry name" value="Herpes_UL55"/>
</dbReference>
<dbReference type="Pfam" id="PF04537">
    <property type="entry name" value="Herpes_UL55"/>
    <property type="match status" value="1"/>
</dbReference>
<evidence type="ECO:0000250" key="1"/>
<evidence type="ECO:0000269" key="2">
    <source>
    </source>
</evidence>
<evidence type="ECO:0000305" key="3"/>
<reference key="1">
    <citation type="journal article" date="1988" name="J. Gen. Virol.">
        <title>The DNA sequences of the long repeat region and adjoining parts of the long unique region in the genome of herpes simplex virus type 1.</title>
        <authorList>
            <person name="Perry L.J."/>
            <person name="McGeoch D.J."/>
        </authorList>
    </citation>
    <scope>NUCLEOTIDE SEQUENCE [GENOMIC DNA]</scope>
</reference>
<reference key="2">
    <citation type="journal article" date="1988" name="J. Gen. Virol.">
        <title>The complete DNA sequence of the long unique region in the genome of herpes simplex virus type 1.</title>
        <authorList>
            <person name="McGeoch D.J."/>
            <person name="Dalrymple M.A."/>
            <person name="Davison A.J."/>
            <person name="Dolan A."/>
            <person name="Frame M.C."/>
            <person name="McNab D."/>
            <person name="Perry L.J."/>
            <person name="Scott J.E."/>
            <person name="Taylor P."/>
        </authorList>
    </citation>
    <scope>NUCLEOTIDE SEQUENCE [LARGE SCALE GENOMIC DNA]</scope>
</reference>
<reference key="3">
    <citation type="submission" date="2008-12" db="EMBL/GenBank/DDBJ databases">
        <title>Herpes simplex virus type 1 bacterial artificial chromosome.</title>
        <authorList>
            <person name="Cunningham C."/>
            <person name="Davison A.J."/>
        </authorList>
    </citation>
    <scope>NUCLEOTIDE SEQUENCE [LARGE SCALE GENOMIC DNA]</scope>
    <source>
        <strain>17 syn+</strain>
    </source>
</reference>
<reference key="4">
    <citation type="journal article" date="2008" name="J. Virol.">
        <title>Comprehensive characterization of extracellular herpes simplex virus type 1 virions.</title>
        <authorList>
            <person name="Loret S."/>
            <person name="Guay G."/>
            <person name="Lippe R."/>
        </authorList>
    </citation>
    <scope>SUBCELLULAR LOCATION</scope>
    <source>
        <strain>F</strain>
    </source>
</reference>
<sequence>MTATPLTNLFLRAPDITHVAPPYCLNATWQAETAMHTSKTDSACVAVRSYLVRASCETSGTIHCFFFAVYKDTHHTPPLITELRNFADLVNHPPVLRELEDKRGVRLRCARPFSVGTIKDVSGSGASSAGEYTINGIVYHCHCRYPFSKTCWMGASAALQHLRSISSSGMAARAAEHRRVKIKIKA</sequence>
<proteinExistence type="inferred from homology"/>